<keyword id="KW-0004">4Fe-4S</keyword>
<keyword id="KW-0963">Cytoplasm</keyword>
<keyword id="KW-0408">Iron</keyword>
<keyword id="KW-0411">Iron-sulfur</keyword>
<keyword id="KW-0479">Metal-binding</keyword>
<keyword id="KW-0949">S-adenosyl-L-methionine</keyword>
<keyword id="KW-0808">Transferase</keyword>
<dbReference type="EC" id="2.8.4.4" evidence="1"/>
<dbReference type="EMBL" id="CP000538">
    <property type="protein sequence ID" value="EAQ72606.1"/>
    <property type="molecule type" value="Genomic_DNA"/>
</dbReference>
<dbReference type="RefSeq" id="WP_002869185.1">
    <property type="nucleotide sequence ID" value="NC_008787.1"/>
</dbReference>
<dbReference type="SMR" id="A1W162"/>
<dbReference type="KEGG" id="cjj:CJJ81176_1447"/>
<dbReference type="eggNOG" id="COG0621">
    <property type="taxonomic scope" value="Bacteria"/>
</dbReference>
<dbReference type="HOGENOM" id="CLU_018697_0_1_7"/>
<dbReference type="Proteomes" id="UP000000646">
    <property type="component" value="Chromosome"/>
</dbReference>
<dbReference type="GO" id="GO:0005829">
    <property type="term" value="C:cytosol"/>
    <property type="evidence" value="ECO:0007669"/>
    <property type="project" value="TreeGrafter"/>
</dbReference>
<dbReference type="GO" id="GO:0051539">
    <property type="term" value="F:4 iron, 4 sulfur cluster binding"/>
    <property type="evidence" value="ECO:0007669"/>
    <property type="project" value="UniProtKB-UniRule"/>
</dbReference>
<dbReference type="GO" id="GO:0035599">
    <property type="term" value="F:aspartic acid methylthiotransferase activity"/>
    <property type="evidence" value="ECO:0007669"/>
    <property type="project" value="TreeGrafter"/>
</dbReference>
<dbReference type="GO" id="GO:0046872">
    <property type="term" value="F:metal ion binding"/>
    <property type="evidence" value="ECO:0007669"/>
    <property type="project" value="UniProtKB-KW"/>
</dbReference>
<dbReference type="GO" id="GO:0103039">
    <property type="term" value="F:protein methylthiotransferase activity"/>
    <property type="evidence" value="ECO:0007669"/>
    <property type="project" value="UniProtKB-EC"/>
</dbReference>
<dbReference type="GO" id="GO:0006400">
    <property type="term" value="P:tRNA modification"/>
    <property type="evidence" value="ECO:0007669"/>
    <property type="project" value="InterPro"/>
</dbReference>
<dbReference type="CDD" id="cd01335">
    <property type="entry name" value="Radical_SAM"/>
    <property type="match status" value="1"/>
</dbReference>
<dbReference type="Gene3D" id="3.40.50.12160">
    <property type="entry name" value="Methylthiotransferase, N-terminal domain"/>
    <property type="match status" value="1"/>
</dbReference>
<dbReference type="Gene3D" id="3.80.30.20">
    <property type="entry name" value="tm_1862 like domain"/>
    <property type="match status" value="1"/>
</dbReference>
<dbReference type="HAMAP" id="MF_01865">
    <property type="entry name" value="MTTase_RimO"/>
    <property type="match status" value="1"/>
</dbReference>
<dbReference type="InterPro" id="IPR006638">
    <property type="entry name" value="Elp3/MiaA/NifB-like_rSAM"/>
</dbReference>
<dbReference type="InterPro" id="IPR005839">
    <property type="entry name" value="Methylthiotransferase"/>
</dbReference>
<dbReference type="InterPro" id="IPR020612">
    <property type="entry name" value="Methylthiotransferase_CS"/>
</dbReference>
<dbReference type="InterPro" id="IPR013848">
    <property type="entry name" value="Methylthiotransferase_N"/>
</dbReference>
<dbReference type="InterPro" id="IPR038135">
    <property type="entry name" value="Methylthiotransferase_N_sf"/>
</dbReference>
<dbReference type="InterPro" id="IPR005840">
    <property type="entry name" value="Ribosomal_uS12_MeSTrfase_RimO"/>
</dbReference>
<dbReference type="InterPro" id="IPR007197">
    <property type="entry name" value="rSAM"/>
</dbReference>
<dbReference type="InterPro" id="IPR023404">
    <property type="entry name" value="rSAM_horseshoe"/>
</dbReference>
<dbReference type="NCBIfam" id="TIGR01125">
    <property type="entry name" value="30S ribosomal protein S12 methylthiotransferase RimO"/>
    <property type="match status" value="1"/>
</dbReference>
<dbReference type="NCBIfam" id="TIGR00089">
    <property type="entry name" value="MiaB/RimO family radical SAM methylthiotransferase"/>
    <property type="match status" value="1"/>
</dbReference>
<dbReference type="PANTHER" id="PTHR43837">
    <property type="entry name" value="RIBOSOMAL PROTEIN S12 METHYLTHIOTRANSFERASE RIMO"/>
    <property type="match status" value="1"/>
</dbReference>
<dbReference type="PANTHER" id="PTHR43837:SF1">
    <property type="entry name" value="RIBOSOMAL PROTEIN US12 METHYLTHIOTRANSFERASE RIMO"/>
    <property type="match status" value="1"/>
</dbReference>
<dbReference type="Pfam" id="PF04055">
    <property type="entry name" value="Radical_SAM"/>
    <property type="match status" value="1"/>
</dbReference>
<dbReference type="Pfam" id="PF00919">
    <property type="entry name" value="UPF0004"/>
    <property type="match status" value="1"/>
</dbReference>
<dbReference type="SFLD" id="SFLDG01082">
    <property type="entry name" value="B12-binding_domain_containing"/>
    <property type="match status" value="1"/>
</dbReference>
<dbReference type="SFLD" id="SFLDS00029">
    <property type="entry name" value="Radical_SAM"/>
    <property type="match status" value="1"/>
</dbReference>
<dbReference type="SFLD" id="SFLDF00274">
    <property type="entry name" value="ribosomal_protein_S12_methylth"/>
    <property type="match status" value="1"/>
</dbReference>
<dbReference type="SMART" id="SM00729">
    <property type="entry name" value="Elp3"/>
    <property type="match status" value="1"/>
</dbReference>
<dbReference type="SUPFAM" id="SSF102114">
    <property type="entry name" value="Radical SAM enzymes"/>
    <property type="match status" value="1"/>
</dbReference>
<dbReference type="PROSITE" id="PS51449">
    <property type="entry name" value="MTTASE_N"/>
    <property type="match status" value="1"/>
</dbReference>
<dbReference type="PROSITE" id="PS01278">
    <property type="entry name" value="MTTASE_RADICAL"/>
    <property type="match status" value="1"/>
</dbReference>
<dbReference type="PROSITE" id="PS51918">
    <property type="entry name" value="RADICAL_SAM"/>
    <property type="match status" value="1"/>
</dbReference>
<feature type="chain" id="PRO_0000374756" description="Ribosomal protein uS12 methylthiotransferase RimO">
    <location>
        <begin position="1"/>
        <end position="439"/>
    </location>
</feature>
<feature type="domain" description="MTTase N-terminal" evidence="1">
    <location>
        <begin position="2"/>
        <end position="114"/>
    </location>
</feature>
<feature type="domain" description="Radical SAM core" evidence="2">
    <location>
        <begin position="132"/>
        <end position="363"/>
    </location>
</feature>
<feature type="binding site" evidence="1">
    <location>
        <position position="11"/>
    </location>
    <ligand>
        <name>[4Fe-4S] cluster</name>
        <dbReference type="ChEBI" id="CHEBI:49883"/>
        <label>1</label>
    </ligand>
</feature>
<feature type="binding site" evidence="1">
    <location>
        <position position="45"/>
    </location>
    <ligand>
        <name>[4Fe-4S] cluster</name>
        <dbReference type="ChEBI" id="CHEBI:49883"/>
        <label>1</label>
    </ligand>
</feature>
<feature type="binding site" evidence="1">
    <location>
        <position position="77"/>
    </location>
    <ligand>
        <name>[4Fe-4S] cluster</name>
        <dbReference type="ChEBI" id="CHEBI:49883"/>
        <label>1</label>
    </ligand>
</feature>
<feature type="binding site" evidence="1">
    <location>
        <position position="146"/>
    </location>
    <ligand>
        <name>[4Fe-4S] cluster</name>
        <dbReference type="ChEBI" id="CHEBI:49883"/>
        <label>2</label>
        <note>4Fe-4S-S-AdoMet</note>
    </ligand>
</feature>
<feature type="binding site" evidence="1">
    <location>
        <position position="150"/>
    </location>
    <ligand>
        <name>[4Fe-4S] cluster</name>
        <dbReference type="ChEBI" id="CHEBI:49883"/>
        <label>2</label>
        <note>4Fe-4S-S-AdoMet</note>
    </ligand>
</feature>
<feature type="binding site" evidence="1">
    <location>
        <position position="153"/>
    </location>
    <ligand>
        <name>[4Fe-4S] cluster</name>
        <dbReference type="ChEBI" id="CHEBI:49883"/>
        <label>2</label>
        <note>4Fe-4S-S-AdoMet</note>
    </ligand>
</feature>
<name>RIMO_CAMJJ</name>
<protein>
    <recommendedName>
        <fullName evidence="1">Ribosomal protein uS12 methylthiotransferase RimO</fullName>
        <shortName evidence="1">uS12 MTTase</shortName>
        <shortName evidence="1">uS12 methylthiotransferase</shortName>
        <ecNumber evidence="1">2.8.4.4</ecNumber>
    </recommendedName>
    <alternativeName>
        <fullName evidence="1">Ribosomal protein uS12 (aspartate-C(3))-methylthiotransferase</fullName>
    </alternativeName>
    <alternativeName>
        <fullName evidence="1">Ribosome maturation factor RimO</fullName>
    </alternativeName>
</protein>
<sequence length="439" mass="49883">MSKLYLMSLGCNKNLVDSEIMLGRLSAYELCDEPSKADVIIVNTCGFIDSAKKESINAILDLHEQRKKDSLLVVTGCLMQRYREELMKELPEVDLFTGVGDYERIDEMILKKTNLFSNSTYLQSENSKRIITGSNSHAFIKIAEGCNQKCSFCAIPSFKGKLKSREISSIIAELKDLVARGYKDFSFIAQDTSSYLFDKGEKDGLIRLIDEVEKIKGIRAARILYLYPTSASEALIKRIIASEIFVNYFDMPLQHISDNMLKIMKRGANSTRLKEMLNLMKSAPNSFLRTGFIVGHPGESEADFEELCEFVKDFGFDRVSVFAYSKEEDTTAFDMEQVPFKVINKRLKIIEKIVDEVIEKSFEKEVGQKRLVVCTGESSEGEFFIAAKDLRWDREIDGEILINESECGNLEMGQIYECEILQNLDKKLLAKALRKVDAN</sequence>
<comment type="function">
    <text evidence="1">Catalyzes the methylthiolation of an aspartic acid residue of ribosomal protein uS12.</text>
</comment>
<comment type="catalytic activity">
    <reaction evidence="1">
        <text>L-aspartate(89)-[ribosomal protein uS12]-hydrogen + (sulfur carrier)-SH + AH2 + 2 S-adenosyl-L-methionine = 3-methylsulfanyl-L-aspartate(89)-[ribosomal protein uS12]-hydrogen + (sulfur carrier)-H + 5'-deoxyadenosine + L-methionine + A + S-adenosyl-L-homocysteine + 2 H(+)</text>
        <dbReference type="Rhea" id="RHEA:37087"/>
        <dbReference type="Rhea" id="RHEA-COMP:10460"/>
        <dbReference type="Rhea" id="RHEA-COMP:10461"/>
        <dbReference type="Rhea" id="RHEA-COMP:14737"/>
        <dbReference type="Rhea" id="RHEA-COMP:14739"/>
        <dbReference type="ChEBI" id="CHEBI:13193"/>
        <dbReference type="ChEBI" id="CHEBI:15378"/>
        <dbReference type="ChEBI" id="CHEBI:17319"/>
        <dbReference type="ChEBI" id="CHEBI:17499"/>
        <dbReference type="ChEBI" id="CHEBI:29917"/>
        <dbReference type="ChEBI" id="CHEBI:29961"/>
        <dbReference type="ChEBI" id="CHEBI:57844"/>
        <dbReference type="ChEBI" id="CHEBI:57856"/>
        <dbReference type="ChEBI" id="CHEBI:59789"/>
        <dbReference type="ChEBI" id="CHEBI:64428"/>
        <dbReference type="ChEBI" id="CHEBI:73599"/>
        <dbReference type="EC" id="2.8.4.4"/>
    </reaction>
</comment>
<comment type="cofactor">
    <cofactor evidence="1">
        <name>[4Fe-4S] cluster</name>
        <dbReference type="ChEBI" id="CHEBI:49883"/>
    </cofactor>
    <text evidence="1">Binds 2 [4Fe-4S] clusters. One cluster is coordinated with 3 cysteines and an exchangeable S-adenosyl-L-methionine.</text>
</comment>
<comment type="subcellular location">
    <subcellularLocation>
        <location evidence="1">Cytoplasm</location>
    </subcellularLocation>
</comment>
<comment type="similarity">
    <text evidence="1">Belongs to the methylthiotransferase family. RimO subfamily.</text>
</comment>
<reference key="1">
    <citation type="submission" date="2006-12" db="EMBL/GenBank/DDBJ databases">
        <authorList>
            <person name="Fouts D.E."/>
            <person name="Nelson K.E."/>
            <person name="Sebastian Y."/>
        </authorList>
    </citation>
    <scope>NUCLEOTIDE SEQUENCE [LARGE SCALE GENOMIC DNA]</scope>
    <source>
        <strain>81-176</strain>
    </source>
</reference>
<proteinExistence type="inferred from homology"/>
<accession>A1W162</accession>
<evidence type="ECO:0000255" key="1">
    <source>
        <dbReference type="HAMAP-Rule" id="MF_01865"/>
    </source>
</evidence>
<evidence type="ECO:0000255" key="2">
    <source>
        <dbReference type="PROSITE-ProRule" id="PRU01266"/>
    </source>
</evidence>
<organism>
    <name type="scientific">Campylobacter jejuni subsp. jejuni serotype O:23/36 (strain 81-176)</name>
    <dbReference type="NCBI Taxonomy" id="354242"/>
    <lineage>
        <taxon>Bacteria</taxon>
        <taxon>Pseudomonadati</taxon>
        <taxon>Campylobacterota</taxon>
        <taxon>Epsilonproteobacteria</taxon>
        <taxon>Campylobacterales</taxon>
        <taxon>Campylobacteraceae</taxon>
        <taxon>Campylobacter</taxon>
    </lineage>
</organism>
<gene>
    <name evidence="1" type="primary">rimO</name>
    <name type="ordered locus">CJJ81176_1447</name>
</gene>